<gene>
    <name evidence="1" type="primary">lipA</name>
    <name type="ordered locus">NTHI0033</name>
</gene>
<reference key="1">
    <citation type="journal article" date="2005" name="J. Bacteriol.">
        <title>Genomic sequence of an otitis media isolate of nontypeable Haemophilus influenzae: comparative study with H. influenzae serotype d, strain KW20.</title>
        <authorList>
            <person name="Harrison A."/>
            <person name="Dyer D.W."/>
            <person name="Gillaspy A."/>
            <person name="Ray W.C."/>
            <person name="Mungur R."/>
            <person name="Carson M.B."/>
            <person name="Zhong H."/>
            <person name="Gipson J."/>
            <person name="Gipson M."/>
            <person name="Johnson L.S."/>
            <person name="Lewis L."/>
            <person name="Bakaletz L.O."/>
            <person name="Munson R.S. Jr."/>
        </authorList>
    </citation>
    <scope>NUCLEOTIDE SEQUENCE [LARGE SCALE GENOMIC DNA]</scope>
    <source>
        <strain>86-028NP</strain>
    </source>
</reference>
<feature type="chain" id="PRO_1000012227" description="Lipoyl synthase">
    <location>
        <begin position="1"/>
        <end position="320"/>
    </location>
</feature>
<feature type="domain" description="Radical SAM core" evidence="2">
    <location>
        <begin position="79"/>
        <end position="296"/>
    </location>
</feature>
<feature type="binding site" evidence="1">
    <location>
        <position position="67"/>
    </location>
    <ligand>
        <name>[4Fe-4S] cluster</name>
        <dbReference type="ChEBI" id="CHEBI:49883"/>
        <label>1</label>
    </ligand>
</feature>
<feature type="binding site" evidence="1">
    <location>
        <position position="72"/>
    </location>
    <ligand>
        <name>[4Fe-4S] cluster</name>
        <dbReference type="ChEBI" id="CHEBI:49883"/>
        <label>1</label>
    </ligand>
</feature>
<feature type="binding site" evidence="1">
    <location>
        <position position="78"/>
    </location>
    <ligand>
        <name>[4Fe-4S] cluster</name>
        <dbReference type="ChEBI" id="CHEBI:49883"/>
        <label>1</label>
    </ligand>
</feature>
<feature type="binding site" evidence="1">
    <location>
        <position position="93"/>
    </location>
    <ligand>
        <name>[4Fe-4S] cluster</name>
        <dbReference type="ChEBI" id="CHEBI:49883"/>
        <label>2</label>
        <note>4Fe-4S-S-AdoMet</note>
    </ligand>
</feature>
<feature type="binding site" evidence="1">
    <location>
        <position position="97"/>
    </location>
    <ligand>
        <name>[4Fe-4S] cluster</name>
        <dbReference type="ChEBI" id="CHEBI:49883"/>
        <label>2</label>
        <note>4Fe-4S-S-AdoMet</note>
    </ligand>
</feature>
<feature type="binding site" evidence="1">
    <location>
        <position position="100"/>
    </location>
    <ligand>
        <name>[4Fe-4S] cluster</name>
        <dbReference type="ChEBI" id="CHEBI:49883"/>
        <label>2</label>
        <note>4Fe-4S-S-AdoMet</note>
    </ligand>
</feature>
<feature type="binding site" evidence="1">
    <location>
        <position position="307"/>
    </location>
    <ligand>
        <name>[4Fe-4S] cluster</name>
        <dbReference type="ChEBI" id="CHEBI:49883"/>
        <label>1</label>
    </ligand>
</feature>
<comment type="function">
    <text evidence="1">Catalyzes the radical-mediated insertion of two sulfur atoms into the C-6 and C-8 positions of the octanoyl moiety bound to the lipoyl domains of lipoate-dependent enzymes, thereby converting the octanoylated domains into lipoylated derivatives.</text>
</comment>
<comment type="catalytic activity">
    <reaction evidence="1">
        <text>[[Fe-S] cluster scaffold protein carrying a second [4Fe-4S](2+) cluster] + N(6)-octanoyl-L-lysyl-[protein] + 2 oxidized [2Fe-2S]-[ferredoxin] + 2 S-adenosyl-L-methionine + 4 H(+) = [[Fe-S] cluster scaffold protein] + N(6)-[(R)-dihydrolipoyl]-L-lysyl-[protein] + 4 Fe(3+) + 2 hydrogen sulfide + 2 5'-deoxyadenosine + 2 L-methionine + 2 reduced [2Fe-2S]-[ferredoxin]</text>
        <dbReference type="Rhea" id="RHEA:16585"/>
        <dbReference type="Rhea" id="RHEA-COMP:9928"/>
        <dbReference type="Rhea" id="RHEA-COMP:10000"/>
        <dbReference type="Rhea" id="RHEA-COMP:10001"/>
        <dbReference type="Rhea" id="RHEA-COMP:10475"/>
        <dbReference type="Rhea" id="RHEA-COMP:14568"/>
        <dbReference type="Rhea" id="RHEA-COMP:14569"/>
        <dbReference type="ChEBI" id="CHEBI:15378"/>
        <dbReference type="ChEBI" id="CHEBI:17319"/>
        <dbReference type="ChEBI" id="CHEBI:29034"/>
        <dbReference type="ChEBI" id="CHEBI:29919"/>
        <dbReference type="ChEBI" id="CHEBI:33722"/>
        <dbReference type="ChEBI" id="CHEBI:33737"/>
        <dbReference type="ChEBI" id="CHEBI:33738"/>
        <dbReference type="ChEBI" id="CHEBI:57844"/>
        <dbReference type="ChEBI" id="CHEBI:59789"/>
        <dbReference type="ChEBI" id="CHEBI:78809"/>
        <dbReference type="ChEBI" id="CHEBI:83100"/>
        <dbReference type="EC" id="2.8.1.8"/>
    </reaction>
</comment>
<comment type="cofactor">
    <cofactor evidence="1">
        <name>[4Fe-4S] cluster</name>
        <dbReference type="ChEBI" id="CHEBI:49883"/>
    </cofactor>
    <text evidence="1">Binds 2 [4Fe-4S] clusters per subunit. One cluster is coordinated with 3 cysteines and an exchangeable S-adenosyl-L-methionine.</text>
</comment>
<comment type="pathway">
    <text evidence="1">Protein modification; protein lipoylation via endogenous pathway; protein N(6)-(lipoyl)lysine from octanoyl-[acyl-carrier-protein]: step 2/2.</text>
</comment>
<comment type="subcellular location">
    <subcellularLocation>
        <location evidence="1">Cytoplasm</location>
    </subcellularLocation>
</comment>
<comment type="similarity">
    <text evidence="1">Belongs to the radical SAM superfamily. Lipoyl synthase family.</text>
</comment>
<protein>
    <recommendedName>
        <fullName evidence="1">Lipoyl synthase</fullName>
        <ecNumber evidence="1">2.8.1.8</ecNumber>
    </recommendedName>
    <alternativeName>
        <fullName evidence="1">Lip-syn</fullName>
        <shortName evidence="1">LS</shortName>
    </alternativeName>
    <alternativeName>
        <fullName evidence="1">Lipoate synthase</fullName>
    </alternativeName>
    <alternativeName>
        <fullName evidence="1">Lipoic acid synthase</fullName>
    </alternativeName>
    <alternativeName>
        <fullName evidence="1">Sulfur insertion protein LipA</fullName>
    </alternativeName>
</protein>
<keyword id="KW-0004">4Fe-4S</keyword>
<keyword id="KW-0963">Cytoplasm</keyword>
<keyword id="KW-0408">Iron</keyword>
<keyword id="KW-0411">Iron-sulfur</keyword>
<keyword id="KW-0479">Metal-binding</keyword>
<keyword id="KW-0949">S-adenosyl-L-methionine</keyword>
<keyword id="KW-0808">Transferase</keyword>
<accession>Q4QPL8</accession>
<proteinExistence type="inferred from homology"/>
<dbReference type="EC" id="2.8.1.8" evidence="1"/>
<dbReference type="EMBL" id="CP000057">
    <property type="protein sequence ID" value="AAX87029.1"/>
    <property type="molecule type" value="Genomic_DNA"/>
</dbReference>
<dbReference type="RefSeq" id="WP_011271785.1">
    <property type="nucleotide sequence ID" value="NC_007146.2"/>
</dbReference>
<dbReference type="SMR" id="Q4QPL8"/>
<dbReference type="GeneID" id="93220782"/>
<dbReference type="KEGG" id="hit:NTHI0033"/>
<dbReference type="HOGENOM" id="CLU_033144_2_1_6"/>
<dbReference type="UniPathway" id="UPA00538">
    <property type="reaction ID" value="UER00593"/>
</dbReference>
<dbReference type="Proteomes" id="UP000002525">
    <property type="component" value="Chromosome"/>
</dbReference>
<dbReference type="GO" id="GO:0005737">
    <property type="term" value="C:cytoplasm"/>
    <property type="evidence" value="ECO:0007669"/>
    <property type="project" value="UniProtKB-SubCell"/>
</dbReference>
<dbReference type="GO" id="GO:0051539">
    <property type="term" value="F:4 iron, 4 sulfur cluster binding"/>
    <property type="evidence" value="ECO:0007669"/>
    <property type="project" value="UniProtKB-UniRule"/>
</dbReference>
<dbReference type="GO" id="GO:0016992">
    <property type="term" value="F:lipoate synthase activity"/>
    <property type="evidence" value="ECO:0007669"/>
    <property type="project" value="UniProtKB-UniRule"/>
</dbReference>
<dbReference type="GO" id="GO:0046872">
    <property type="term" value="F:metal ion binding"/>
    <property type="evidence" value="ECO:0007669"/>
    <property type="project" value="UniProtKB-KW"/>
</dbReference>
<dbReference type="CDD" id="cd01335">
    <property type="entry name" value="Radical_SAM"/>
    <property type="match status" value="1"/>
</dbReference>
<dbReference type="FunFam" id="3.20.20.70:FF:000023">
    <property type="entry name" value="Lipoyl synthase"/>
    <property type="match status" value="1"/>
</dbReference>
<dbReference type="Gene3D" id="3.20.20.70">
    <property type="entry name" value="Aldolase class I"/>
    <property type="match status" value="1"/>
</dbReference>
<dbReference type="HAMAP" id="MF_00206">
    <property type="entry name" value="Lipoyl_synth"/>
    <property type="match status" value="1"/>
</dbReference>
<dbReference type="InterPro" id="IPR013785">
    <property type="entry name" value="Aldolase_TIM"/>
</dbReference>
<dbReference type="InterPro" id="IPR006638">
    <property type="entry name" value="Elp3/MiaA/NifB-like_rSAM"/>
</dbReference>
<dbReference type="InterPro" id="IPR031691">
    <property type="entry name" value="LIAS_N"/>
</dbReference>
<dbReference type="InterPro" id="IPR003698">
    <property type="entry name" value="Lipoyl_synth"/>
</dbReference>
<dbReference type="InterPro" id="IPR007197">
    <property type="entry name" value="rSAM"/>
</dbReference>
<dbReference type="NCBIfam" id="TIGR00510">
    <property type="entry name" value="lipA"/>
    <property type="match status" value="1"/>
</dbReference>
<dbReference type="NCBIfam" id="NF004019">
    <property type="entry name" value="PRK05481.1"/>
    <property type="match status" value="1"/>
</dbReference>
<dbReference type="NCBIfam" id="NF009544">
    <property type="entry name" value="PRK12928.1"/>
    <property type="match status" value="1"/>
</dbReference>
<dbReference type="PANTHER" id="PTHR10949">
    <property type="entry name" value="LIPOYL SYNTHASE"/>
    <property type="match status" value="1"/>
</dbReference>
<dbReference type="PANTHER" id="PTHR10949:SF0">
    <property type="entry name" value="LIPOYL SYNTHASE, MITOCHONDRIAL"/>
    <property type="match status" value="1"/>
</dbReference>
<dbReference type="Pfam" id="PF16881">
    <property type="entry name" value="LIAS_N"/>
    <property type="match status" value="1"/>
</dbReference>
<dbReference type="Pfam" id="PF04055">
    <property type="entry name" value="Radical_SAM"/>
    <property type="match status" value="1"/>
</dbReference>
<dbReference type="PIRSF" id="PIRSF005963">
    <property type="entry name" value="Lipoyl_synth"/>
    <property type="match status" value="1"/>
</dbReference>
<dbReference type="SFLD" id="SFLDF00271">
    <property type="entry name" value="lipoyl_synthase"/>
    <property type="match status" value="1"/>
</dbReference>
<dbReference type="SFLD" id="SFLDG01058">
    <property type="entry name" value="lipoyl_synthase_like"/>
    <property type="match status" value="1"/>
</dbReference>
<dbReference type="SMART" id="SM00729">
    <property type="entry name" value="Elp3"/>
    <property type="match status" value="1"/>
</dbReference>
<dbReference type="SUPFAM" id="SSF102114">
    <property type="entry name" value="Radical SAM enzymes"/>
    <property type="match status" value="1"/>
</dbReference>
<dbReference type="PROSITE" id="PS51918">
    <property type="entry name" value="RADICAL_SAM"/>
    <property type="match status" value="1"/>
</dbReference>
<name>LIPA_HAEI8</name>
<evidence type="ECO:0000255" key="1">
    <source>
        <dbReference type="HAMAP-Rule" id="MF_00206"/>
    </source>
</evidence>
<evidence type="ECO:0000255" key="2">
    <source>
        <dbReference type="PROSITE-ProRule" id="PRU01266"/>
    </source>
</evidence>
<sequence>MSTPFKMERGVKYRDAAKTSIIPVKNIDPNQELLKKPEWMKIKLPASSAKIESIKNGMRRHGLHSVCEEASCPNLHECFNHGTATFMILGAICTRRCPFCDVAHGKPLPPDPEEPQKLAETIQDMKLKYVVITSVDRDDLPDRGAGHFSECVKAVRELNPNIKIEILVPDFRGRITQALEKLKDNPPDVFNHNLENVPRLYKEIRPGADYEWSLKLLREFKEIFPNIPTKSGLMVGLGETNEEILQVMQDLRDNGVTMLTLGQYLQPSRHHLPVARYVPPTEFDEFRDKANEMGFEHAACGPFVRSSYHADLQASGGLVK</sequence>
<organism>
    <name type="scientific">Haemophilus influenzae (strain 86-028NP)</name>
    <dbReference type="NCBI Taxonomy" id="281310"/>
    <lineage>
        <taxon>Bacteria</taxon>
        <taxon>Pseudomonadati</taxon>
        <taxon>Pseudomonadota</taxon>
        <taxon>Gammaproteobacteria</taxon>
        <taxon>Pasteurellales</taxon>
        <taxon>Pasteurellaceae</taxon>
        <taxon>Haemophilus</taxon>
    </lineage>
</organism>